<sequence>MYKSIFKTTGRLGKTVSSRNFVTTLPKPLATSSSPATNAPNKTSNPKTGELHVSTPVDTAKISIEPPEGSSISLKSASRDASLFGTRPIYLDVQATTPVDPRVLDKMLEFYTGLYGNPHSSTHAYGWETDKEVEKARTYIADVINADPKEIIFTSGATETNNMAIKGVPRFYKKTKKHIITTQTEHKCVLDSARHMQDEGFEVTYLPVSSEGLINLDDLKKAIRKDTVLVSIMAVNNEIGVIQPLKEIGKICRENKVFFHTDAAQAYGKIPIDVNEMNIDLLSISSHKIYGPKGIGACYVRRRPRVRLDPIITGGGQERGLRSGTLAPPLVAGFGEAARLMKQESSFDKRHIEKLSSKLKNGLLSIPSTQFNGCNDAKSQYPGCVNVSFAYIEGESLLMALKDIALSSGSACTSASLEPSYVLHALGADDALAHSSIRFGIGRFTTEAEVDYVIQAINERVDFLRKMSPLWEMVQEGIDLNTIEWSGH</sequence>
<reference key="1">
    <citation type="journal article" date="1998" name="Yeast">
        <title>The SPL1 tRNA splicing gene of Candida maltosa and Candida albicans.</title>
        <authorList>
            <person name="Plant E.P."/>
            <person name="Becher D."/>
            <person name="Poulter R.T.M."/>
        </authorList>
    </citation>
    <scope>NUCLEOTIDE SEQUENCE [GENOMIC DNA]</scope>
</reference>
<reference key="2">
    <citation type="journal article" date="2005" name="Genetics">
        <title>Sequence finishing and gene mapping for Candida albicans chromosome 7 and syntenic analysis against the Saccharomyces cerevisiae genome.</title>
        <authorList>
            <person name="Chibana H."/>
            <person name="Oka N."/>
            <person name="Nakayama H."/>
            <person name="Aoyama T."/>
            <person name="Magee B.B."/>
            <person name="Magee P.T."/>
            <person name="Mikami Y."/>
        </authorList>
    </citation>
    <scope>NUCLEOTIDE SEQUENCE [LARGE SCALE GENOMIC DNA]</scope>
    <source>
        <strain>SC5314 / ATCC MYA-2876</strain>
    </source>
</reference>
<reference key="3">
    <citation type="journal article" date="2004" name="Proc. Natl. Acad. Sci. U.S.A.">
        <title>The diploid genome sequence of Candida albicans.</title>
        <authorList>
            <person name="Jones T."/>
            <person name="Federspiel N.A."/>
            <person name="Chibana H."/>
            <person name="Dungan J."/>
            <person name="Kalman S."/>
            <person name="Magee B.B."/>
            <person name="Newport G."/>
            <person name="Thorstenson Y.R."/>
            <person name="Agabian N."/>
            <person name="Magee P.T."/>
            <person name="Davis R.W."/>
            <person name="Scherer S."/>
        </authorList>
    </citation>
    <scope>NUCLEOTIDE SEQUENCE [LARGE SCALE GENOMIC DNA]</scope>
    <source>
        <strain>SC5314 / ATCC MYA-2876</strain>
    </source>
</reference>
<reference key="4">
    <citation type="journal article" date="2007" name="Genome Biol.">
        <title>Assembly of the Candida albicans genome into sixteen supercontigs aligned on the eight chromosomes.</title>
        <authorList>
            <person name="van het Hoog M."/>
            <person name="Rast T.J."/>
            <person name="Martchenko M."/>
            <person name="Grindle S."/>
            <person name="Dignard D."/>
            <person name="Hogues H."/>
            <person name="Cuomo C."/>
            <person name="Berriman M."/>
            <person name="Scherer S."/>
            <person name="Magee B.B."/>
            <person name="Whiteway M."/>
            <person name="Chibana H."/>
            <person name="Nantel A."/>
            <person name="Magee P.T."/>
        </authorList>
    </citation>
    <scope>GENOME REANNOTATION</scope>
    <source>
        <strain>SC5314 / ATCC MYA-2876</strain>
    </source>
</reference>
<reference key="5">
    <citation type="journal article" date="2013" name="Genome Biol.">
        <title>Assembly of a phased diploid Candida albicans genome facilitates allele-specific measurements and provides a simple model for repeat and indel structure.</title>
        <authorList>
            <person name="Muzzey D."/>
            <person name="Schwartz K."/>
            <person name="Weissman J.S."/>
            <person name="Sherlock G."/>
        </authorList>
    </citation>
    <scope>NUCLEOTIDE SEQUENCE [LARGE SCALE GENOMIC DNA]</scope>
    <scope>GENOME REANNOTATION</scope>
    <source>
        <strain>SC5314 / ATCC MYA-2876</strain>
    </source>
</reference>
<reference key="6">
    <citation type="journal article" date="2004" name="Mol. Microbiol.">
        <title>Regulatory networks affected by iron availability in Candida albicans.</title>
        <authorList>
            <person name="Lan C.Y."/>
            <person name="Rodarte G."/>
            <person name="Murillo L.A."/>
            <person name="Jones T."/>
            <person name="Davis R.W."/>
            <person name="Dungan J."/>
            <person name="Newport G."/>
            <person name="Agabian N."/>
        </authorList>
    </citation>
    <scope>INDUCTION</scope>
</reference>
<comment type="function">
    <text evidence="4">Catalyzes the removal of elemental sulfur from cysteine to produce alanine. It supplies the inorganic sulfur for iron-sulfur (Fe-S) clusters. Plays a role in both tRNA-processing and mitochondrial metabolism. Involved in the 2-thio-modification of both 5-carboxymethylaminomethyl-2-thiouridine in mitochondrial tRNAs and 5-methoxycarbonylmethyl-2-thiouridine (mcm5s2U) in cytoplasmic tRNAs.</text>
</comment>
<comment type="catalytic activity">
    <reaction evidence="4">
        <text>(sulfur carrier)-H + L-cysteine = (sulfur carrier)-SH + L-alanine</text>
        <dbReference type="Rhea" id="RHEA:43892"/>
        <dbReference type="Rhea" id="RHEA-COMP:14737"/>
        <dbReference type="Rhea" id="RHEA-COMP:14739"/>
        <dbReference type="ChEBI" id="CHEBI:29917"/>
        <dbReference type="ChEBI" id="CHEBI:35235"/>
        <dbReference type="ChEBI" id="CHEBI:57972"/>
        <dbReference type="ChEBI" id="CHEBI:64428"/>
        <dbReference type="EC" id="2.8.1.7"/>
    </reaction>
</comment>
<comment type="cofactor">
    <cofactor evidence="3">
        <name>pyridoxal 5'-phosphate</name>
        <dbReference type="ChEBI" id="CHEBI:597326"/>
    </cofactor>
</comment>
<comment type="subcellular location">
    <subcellularLocation>
        <location evidence="4">Mitochondrion</location>
    </subcellularLocation>
</comment>
<comment type="induction">
    <text evidence="7">Expression is up-regulated at high-iron conditions.</text>
</comment>
<comment type="similarity">
    <text evidence="9">Belongs to the class-V pyridoxal-phosphate-dependent aminotransferase family. NifS/IscS subfamily.</text>
</comment>
<feature type="transit peptide" description="Mitochondrion" evidence="5">
    <location>
        <begin position="1"/>
        <end status="unknown"/>
    </location>
</feature>
<feature type="chain" id="PRO_0000001301" description="Cysteine desulfurase, mitochondrial">
    <location>
        <begin status="unknown"/>
        <end position="488"/>
    </location>
</feature>
<feature type="region of interest" description="Disordered" evidence="6">
    <location>
        <begin position="25"/>
        <end position="52"/>
    </location>
</feature>
<feature type="compositionally biased region" description="Polar residues" evidence="6">
    <location>
        <begin position="30"/>
        <end position="47"/>
    </location>
</feature>
<feature type="active site" description="Cysteine persulfide intermediate" evidence="2">
    <location>
        <position position="412"/>
    </location>
</feature>
<feature type="binding site" evidence="3">
    <location>
        <begin position="157"/>
        <end position="158"/>
    </location>
    <ligand>
        <name>pyridoxal 5'-phosphate</name>
        <dbReference type="ChEBI" id="CHEBI:597326"/>
    </ligand>
</feature>
<feature type="binding site" evidence="1">
    <location>
        <position position="237"/>
    </location>
    <ligand>
        <name>pyridoxal 5'-phosphate</name>
        <dbReference type="ChEBI" id="CHEBI:597326"/>
    </ligand>
</feature>
<feature type="binding site" evidence="3">
    <location>
        <position position="265"/>
    </location>
    <ligand>
        <name>pyridoxal 5'-phosphate</name>
        <dbReference type="ChEBI" id="CHEBI:597326"/>
    </ligand>
</feature>
<feature type="binding site" evidence="3">
    <location>
        <begin position="285"/>
        <end position="287"/>
    </location>
    <ligand>
        <name>pyridoxal 5'-phosphate</name>
        <dbReference type="ChEBI" id="CHEBI:597326"/>
    </ligand>
</feature>
<feature type="binding site" evidence="3">
    <location>
        <position position="325"/>
    </location>
    <ligand>
        <name>pyridoxal 5'-phosphate</name>
        <dbReference type="ChEBI" id="CHEBI:597326"/>
    </ligand>
</feature>
<feature type="binding site" description="via persulfide group" evidence="1">
    <location>
        <position position="412"/>
    </location>
    <ligand>
        <name>[2Fe-2S] cluster</name>
        <dbReference type="ChEBI" id="CHEBI:190135"/>
    </ligand>
</feature>
<feature type="modified residue" description="N6-(pyridoxal phosphate)lysine" evidence="3">
    <location>
        <position position="288"/>
    </location>
</feature>
<accession>P87185</accession>
<accession>A0A1D8PQK2</accession>
<accession>Q3MPU0</accession>
<accession>Q5AFI7</accession>
<proteinExistence type="evidence at transcript level"/>
<name>NFS1_CANAL</name>
<gene>
    <name type="primary">NFS1</name>
    <name evidence="8" type="synonym">SPL1</name>
    <name type="ordered locus">CAALFM_C700390WA</name>
    <name type="ORF">CaJ7.0052</name>
    <name type="ORF">CaO19.7081</name>
</gene>
<organism>
    <name type="scientific">Candida albicans (strain SC5314 / ATCC MYA-2876)</name>
    <name type="common">Yeast</name>
    <dbReference type="NCBI Taxonomy" id="237561"/>
    <lineage>
        <taxon>Eukaryota</taxon>
        <taxon>Fungi</taxon>
        <taxon>Dikarya</taxon>
        <taxon>Ascomycota</taxon>
        <taxon>Saccharomycotina</taxon>
        <taxon>Pichiomycetes</taxon>
        <taxon>Debaryomycetaceae</taxon>
        <taxon>Candida/Lodderomyces clade</taxon>
        <taxon>Candida</taxon>
    </lineage>
</organism>
<keyword id="KW-0408">Iron</keyword>
<keyword id="KW-0411">Iron-sulfur</keyword>
<keyword id="KW-0479">Metal-binding</keyword>
<keyword id="KW-0496">Mitochondrion</keyword>
<keyword id="KW-0663">Pyridoxal phosphate</keyword>
<keyword id="KW-1185">Reference proteome</keyword>
<keyword id="KW-0808">Transferase</keyword>
<keyword id="KW-0809">Transit peptide</keyword>
<keyword id="KW-0819">tRNA processing</keyword>
<protein>
    <recommendedName>
        <fullName evidence="4">Cysteine desulfurase, mitochondrial</fullName>
        <ecNumber evidence="4">2.8.1.7</ecNumber>
    </recommendedName>
    <alternativeName>
        <fullName evidence="4">tRNA-splicing protein SPL1</fullName>
    </alternativeName>
</protein>
<evidence type="ECO:0000250" key="1">
    <source>
        <dbReference type="UniProtKB" id="O29689"/>
    </source>
</evidence>
<evidence type="ECO:0000250" key="2">
    <source>
        <dbReference type="UniProtKB" id="P0A6B7"/>
    </source>
</evidence>
<evidence type="ECO:0000250" key="3">
    <source>
        <dbReference type="UniProtKB" id="P0A6B9"/>
    </source>
</evidence>
<evidence type="ECO:0000250" key="4">
    <source>
        <dbReference type="UniProtKB" id="P25374"/>
    </source>
</evidence>
<evidence type="ECO:0000255" key="5"/>
<evidence type="ECO:0000256" key="6">
    <source>
        <dbReference type="SAM" id="MobiDB-lite"/>
    </source>
</evidence>
<evidence type="ECO:0000269" key="7">
    <source>
    </source>
</evidence>
<evidence type="ECO:0000303" key="8">
    <source>
    </source>
</evidence>
<evidence type="ECO:0000305" key="9"/>
<dbReference type="EC" id="2.8.1.7" evidence="4"/>
<dbReference type="EMBL" id="AF000120">
    <property type="protein sequence ID" value="AAC49940.1"/>
    <property type="molecule type" value="Genomic_DNA"/>
</dbReference>
<dbReference type="EMBL" id="AP006852">
    <property type="protein sequence ID" value="BAE44570.1"/>
    <property type="molecule type" value="Genomic_DNA"/>
</dbReference>
<dbReference type="EMBL" id="CP017629">
    <property type="protein sequence ID" value="AOW30418.1"/>
    <property type="molecule type" value="Genomic_DNA"/>
</dbReference>
<dbReference type="RefSeq" id="XP_720372.1">
    <property type="nucleotide sequence ID" value="XM_715279.1"/>
</dbReference>
<dbReference type="SMR" id="P87185"/>
<dbReference type="FunCoup" id="P87185">
    <property type="interactions" value="932"/>
</dbReference>
<dbReference type="STRING" id="237561.P87185"/>
<dbReference type="EnsemblFungi" id="C7_00390W_A-T">
    <property type="protein sequence ID" value="C7_00390W_A-T-p1"/>
    <property type="gene ID" value="C7_00390W_A"/>
</dbReference>
<dbReference type="GeneID" id="3638035"/>
<dbReference type="KEGG" id="cal:CAALFM_C700390WA"/>
<dbReference type="CGD" id="CAL0000182012">
    <property type="gene designation" value="SPL1"/>
</dbReference>
<dbReference type="VEuPathDB" id="FungiDB:C7_00390W_A"/>
<dbReference type="eggNOG" id="KOG1549">
    <property type="taxonomic scope" value="Eukaryota"/>
</dbReference>
<dbReference type="HOGENOM" id="CLU_003433_0_2_1"/>
<dbReference type="InParanoid" id="P87185"/>
<dbReference type="OMA" id="KGLYWAR"/>
<dbReference type="OrthoDB" id="10250117at2759"/>
<dbReference type="Proteomes" id="UP000000559">
    <property type="component" value="Chromosome 7"/>
</dbReference>
<dbReference type="GO" id="GO:0005829">
    <property type="term" value="C:cytosol"/>
    <property type="evidence" value="ECO:0000318"/>
    <property type="project" value="GO_Central"/>
</dbReference>
<dbReference type="GO" id="GO:1990221">
    <property type="term" value="C:L-cysteine desulfurase complex"/>
    <property type="evidence" value="ECO:0007669"/>
    <property type="project" value="EnsemblFungi"/>
</dbReference>
<dbReference type="GO" id="GO:0005739">
    <property type="term" value="C:mitochondrion"/>
    <property type="evidence" value="ECO:0000318"/>
    <property type="project" value="GO_Central"/>
</dbReference>
<dbReference type="GO" id="GO:0005634">
    <property type="term" value="C:nucleus"/>
    <property type="evidence" value="ECO:0000318"/>
    <property type="project" value="GO_Central"/>
</dbReference>
<dbReference type="GO" id="GO:0004123">
    <property type="term" value="F:cystathionine gamma-lyase activity"/>
    <property type="evidence" value="ECO:0000303"/>
    <property type="project" value="CGD"/>
</dbReference>
<dbReference type="GO" id="GO:0031071">
    <property type="term" value="F:cysteine desulfurase activity"/>
    <property type="evidence" value="ECO:0000318"/>
    <property type="project" value="GO_Central"/>
</dbReference>
<dbReference type="GO" id="GO:0051536">
    <property type="term" value="F:iron-sulfur cluster binding"/>
    <property type="evidence" value="ECO:0007669"/>
    <property type="project" value="UniProtKB-KW"/>
</dbReference>
<dbReference type="GO" id="GO:0046872">
    <property type="term" value="F:metal ion binding"/>
    <property type="evidence" value="ECO:0007669"/>
    <property type="project" value="UniProtKB-KW"/>
</dbReference>
<dbReference type="GO" id="GO:0030170">
    <property type="term" value="F:pyridoxal phosphate binding"/>
    <property type="evidence" value="ECO:0007669"/>
    <property type="project" value="InterPro"/>
</dbReference>
<dbReference type="GO" id="GO:0044571">
    <property type="term" value="P:[2Fe-2S] cluster assembly"/>
    <property type="evidence" value="ECO:0007669"/>
    <property type="project" value="InterPro"/>
</dbReference>
<dbReference type="GO" id="GO:0006879">
    <property type="term" value="P:intracellular iron ion homeostasis"/>
    <property type="evidence" value="ECO:0007669"/>
    <property type="project" value="EnsemblFungi"/>
</dbReference>
<dbReference type="GO" id="GO:0016226">
    <property type="term" value="P:iron-sulfur cluster assembly"/>
    <property type="evidence" value="ECO:0000318"/>
    <property type="project" value="GO_Central"/>
</dbReference>
<dbReference type="GO" id="GO:0070903">
    <property type="term" value="P:mitochondrial tRNA thio-modification"/>
    <property type="evidence" value="ECO:0007669"/>
    <property type="project" value="EnsemblFungi"/>
</dbReference>
<dbReference type="GO" id="GO:0002143">
    <property type="term" value="P:tRNA wobble position uridine thiolation"/>
    <property type="evidence" value="ECO:0007669"/>
    <property type="project" value="EnsemblFungi"/>
</dbReference>
<dbReference type="FunFam" id="3.40.640.10:FF:000003">
    <property type="entry name" value="Cysteine desulfurase IscS"/>
    <property type="match status" value="1"/>
</dbReference>
<dbReference type="FunFam" id="3.90.1150.10:FF:000002">
    <property type="entry name" value="Cysteine desulfurase IscS"/>
    <property type="match status" value="1"/>
</dbReference>
<dbReference type="Gene3D" id="3.90.1150.10">
    <property type="entry name" value="Aspartate Aminotransferase, domain 1"/>
    <property type="match status" value="1"/>
</dbReference>
<dbReference type="Gene3D" id="3.40.640.10">
    <property type="entry name" value="Type I PLP-dependent aspartate aminotransferase-like (Major domain)"/>
    <property type="match status" value="1"/>
</dbReference>
<dbReference type="HAMAP" id="MF_00331">
    <property type="entry name" value="Cys_desulf_IscS"/>
    <property type="match status" value="1"/>
</dbReference>
<dbReference type="InterPro" id="IPR000192">
    <property type="entry name" value="Aminotrans_V_dom"/>
</dbReference>
<dbReference type="InterPro" id="IPR020578">
    <property type="entry name" value="Aminotrans_V_PyrdxlP_BS"/>
</dbReference>
<dbReference type="InterPro" id="IPR010240">
    <property type="entry name" value="Cys_deSase_IscS"/>
</dbReference>
<dbReference type="InterPro" id="IPR015424">
    <property type="entry name" value="PyrdxlP-dep_Trfase"/>
</dbReference>
<dbReference type="InterPro" id="IPR015421">
    <property type="entry name" value="PyrdxlP-dep_Trfase_major"/>
</dbReference>
<dbReference type="InterPro" id="IPR015422">
    <property type="entry name" value="PyrdxlP-dep_Trfase_small"/>
</dbReference>
<dbReference type="NCBIfam" id="NF002806">
    <property type="entry name" value="PRK02948.1"/>
    <property type="match status" value="1"/>
</dbReference>
<dbReference type="NCBIfam" id="NF010611">
    <property type="entry name" value="PRK14012.1"/>
    <property type="match status" value="1"/>
</dbReference>
<dbReference type="PANTHER" id="PTHR11601:SF34">
    <property type="entry name" value="CYSTEINE DESULFURASE"/>
    <property type="match status" value="1"/>
</dbReference>
<dbReference type="PANTHER" id="PTHR11601">
    <property type="entry name" value="CYSTEINE DESULFURYLASE FAMILY MEMBER"/>
    <property type="match status" value="1"/>
</dbReference>
<dbReference type="Pfam" id="PF00266">
    <property type="entry name" value="Aminotran_5"/>
    <property type="match status" value="1"/>
</dbReference>
<dbReference type="SUPFAM" id="SSF53383">
    <property type="entry name" value="PLP-dependent transferases"/>
    <property type="match status" value="1"/>
</dbReference>
<dbReference type="PROSITE" id="PS00595">
    <property type="entry name" value="AA_TRANSFER_CLASS_5"/>
    <property type="match status" value="1"/>
</dbReference>